<proteinExistence type="inferred from homology"/>
<protein>
    <recommendedName>
        <fullName evidence="1">Acetate kinase</fullName>
        <ecNumber evidence="1">2.7.2.1</ecNumber>
    </recommendedName>
    <alternativeName>
        <fullName evidence="1">Acetokinase</fullName>
    </alternativeName>
</protein>
<gene>
    <name evidence="1" type="primary">ackA</name>
    <name type="ordered locus">Exig_2226</name>
</gene>
<reference key="1">
    <citation type="submission" date="2008-04" db="EMBL/GenBank/DDBJ databases">
        <title>Complete sequence of chromosome of Exiguobacterium sibiricum 255-15.</title>
        <authorList>
            <consortium name="US DOE Joint Genome Institute"/>
            <person name="Copeland A."/>
            <person name="Lucas S."/>
            <person name="Lapidus A."/>
            <person name="Glavina del Rio T."/>
            <person name="Dalin E."/>
            <person name="Tice H."/>
            <person name="Bruce D."/>
            <person name="Goodwin L."/>
            <person name="Pitluck S."/>
            <person name="Kiss H."/>
            <person name="Chertkov O."/>
            <person name="Monk C."/>
            <person name="Brettin T."/>
            <person name="Detter J.C."/>
            <person name="Han C."/>
            <person name="Kuske C.R."/>
            <person name="Schmutz J."/>
            <person name="Larimer F."/>
            <person name="Land M."/>
            <person name="Hauser L."/>
            <person name="Kyrpides N."/>
            <person name="Mikhailova N."/>
            <person name="Vishnivetskaya T."/>
            <person name="Rodrigues D.F."/>
            <person name="Gilichinsky D."/>
            <person name="Tiedje J."/>
            <person name="Richardson P."/>
        </authorList>
    </citation>
    <scope>NUCLEOTIDE SEQUENCE [LARGE SCALE GENOMIC DNA]</scope>
    <source>
        <strain>DSM 17290 / CCUG 55495 / CIP 109462 / JCM 13490 / 255-15</strain>
    </source>
</reference>
<name>ACKA_EXIS2</name>
<organism>
    <name type="scientific">Exiguobacterium sibiricum (strain DSM 17290 / CCUG 55495 / CIP 109462 / JCM 13490 / 255-15)</name>
    <dbReference type="NCBI Taxonomy" id="262543"/>
    <lineage>
        <taxon>Bacteria</taxon>
        <taxon>Bacillati</taxon>
        <taxon>Bacillota</taxon>
        <taxon>Bacilli</taxon>
        <taxon>Bacillales</taxon>
        <taxon>Bacillales Family XII. Incertae Sedis</taxon>
        <taxon>Exiguobacterium</taxon>
    </lineage>
</organism>
<feature type="chain" id="PRO_1000089973" description="Acetate kinase">
    <location>
        <begin position="1"/>
        <end position="403"/>
    </location>
</feature>
<feature type="active site" description="Proton donor/acceptor" evidence="1">
    <location>
        <position position="147"/>
    </location>
</feature>
<feature type="binding site" evidence="1">
    <location>
        <position position="8"/>
    </location>
    <ligand>
        <name>Mg(2+)</name>
        <dbReference type="ChEBI" id="CHEBI:18420"/>
    </ligand>
</feature>
<feature type="binding site" evidence="1">
    <location>
        <position position="15"/>
    </location>
    <ligand>
        <name>ATP</name>
        <dbReference type="ChEBI" id="CHEBI:30616"/>
    </ligand>
</feature>
<feature type="binding site" evidence="1">
    <location>
        <position position="90"/>
    </location>
    <ligand>
        <name>substrate</name>
    </ligand>
</feature>
<feature type="binding site" evidence="1">
    <location>
        <begin position="207"/>
        <end position="211"/>
    </location>
    <ligand>
        <name>ATP</name>
        <dbReference type="ChEBI" id="CHEBI:30616"/>
    </ligand>
</feature>
<feature type="binding site" evidence="1">
    <location>
        <begin position="282"/>
        <end position="284"/>
    </location>
    <ligand>
        <name>ATP</name>
        <dbReference type="ChEBI" id="CHEBI:30616"/>
    </ligand>
</feature>
<feature type="binding site" evidence="1">
    <location>
        <begin position="330"/>
        <end position="334"/>
    </location>
    <ligand>
        <name>ATP</name>
        <dbReference type="ChEBI" id="CHEBI:30616"/>
    </ligand>
</feature>
<feature type="binding site" evidence="1">
    <location>
        <position position="384"/>
    </location>
    <ligand>
        <name>Mg(2+)</name>
        <dbReference type="ChEBI" id="CHEBI:18420"/>
    </ligand>
</feature>
<feature type="site" description="Transition state stabilizer" evidence="1">
    <location>
        <position position="179"/>
    </location>
</feature>
<feature type="site" description="Transition state stabilizer" evidence="1">
    <location>
        <position position="240"/>
    </location>
</feature>
<dbReference type="EC" id="2.7.2.1" evidence="1"/>
<dbReference type="EMBL" id="CP001022">
    <property type="protein sequence ID" value="ACB61678.1"/>
    <property type="molecule type" value="Genomic_DNA"/>
</dbReference>
<dbReference type="RefSeq" id="WP_012371095.1">
    <property type="nucleotide sequence ID" value="NC_010556.1"/>
</dbReference>
<dbReference type="SMR" id="B1YKC5"/>
<dbReference type="STRING" id="262543.Exig_2226"/>
<dbReference type="KEGG" id="esi:Exig_2226"/>
<dbReference type="eggNOG" id="COG0282">
    <property type="taxonomic scope" value="Bacteria"/>
</dbReference>
<dbReference type="HOGENOM" id="CLU_020352_0_1_9"/>
<dbReference type="OrthoDB" id="9802453at2"/>
<dbReference type="UniPathway" id="UPA00340">
    <property type="reaction ID" value="UER00458"/>
</dbReference>
<dbReference type="Proteomes" id="UP000001681">
    <property type="component" value="Chromosome"/>
</dbReference>
<dbReference type="GO" id="GO:0005737">
    <property type="term" value="C:cytoplasm"/>
    <property type="evidence" value="ECO:0007669"/>
    <property type="project" value="UniProtKB-SubCell"/>
</dbReference>
<dbReference type="GO" id="GO:0008776">
    <property type="term" value="F:acetate kinase activity"/>
    <property type="evidence" value="ECO:0007669"/>
    <property type="project" value="UniProtKB-UniRule"/>
</dbReference>
<dbReference type="GO" id="GO:0005524">
    <property type="term" value="F:ATP binding"/>
    <property type="evidence" value="ECO:0007669"/>
    <property type="project" value="UniProtKB-KW"/>
</dbReference>
<dbReference type="GO" id="GO:0000287">
    <property type="term" value="F:magnesium ion binding"/>
    <property type="evidence" value="ECO:0007669"/>
    <property type="project" value="UniProtKB-UniRule"/>
</dbReference>
<dbReference type="GO" id="GO:0006083">
    <property type="term" value="P:acetate metabolic process"/>
    <property type="evidence" value="ECO:0007669"/>
    <property type="project" value="TreeGrafter"/>
</dbReference>
<dbReference type="GO" id="GO:0006085">
    <property type="term" value="P:acetyl-CoA biosynthetic process"/>
    <property type="evidence" value="ECO:0007669"/>
    <property type="project" value="UniProtKB-UniRule"/>
</dbReference>
<dbReference type="CDD" id="cd24010">
    <property type="entry name" value="ASKHA_NBD_AcK_PK"/>
    <property type="match status" value="1"/>
</dbReference>
<dbReference type="Gene3D" id="3.30.420.40">
    <property type="match status" value="2"/>
</dbReference>
<dbReference type="HAMAP" id="MF_00020">
    <property type="entry name" value="Acetate_kinase"/>
    <property type="match status" value="1"/>
</dbReference>
<dbReference type="InterPro" id="IPR004372">
    <property type="entry name" value="Ac/propionate_kinase"/>
</dbReference>
<dbReference type="InterPro" id="IPR000890">
    <property type="entry name" value="Aliphatic_acid_kin_short-chain"/>
</dbReference>
<dbReference type="InterPro" id="IPR023865">
    <property type="entry name" value="Aliphatic_acid_kinase_CS"/>
</dbReference>
<dbReference type="InterPro" id="IPR043129">
    <property type="entry name" value="ATPase_NBD"/>
</dbReference>
<dbReference type="NCBIfam" id="TIGR00016">
    <property type="entry name" value="ackA"/>
    <property type="match status" value="1"/>
</dbReference>
<dbReference type="PANTHER" id="PTHR21060">
    <property type="entry name" value="ACETATE KINASE"/>
    <property type="match status" value="1"/>
</dbReference>
<dbReference type="PANTHER" id="PTHR21060:SF15">
    <property type="entry name" value="ACETATE KINASE-RELATED"/>
    <property type="match status" value="1"/>
</dbReference>
<dbReference type="Pfam" id="PF00871">
    <property type="entry name" value="Acetate_kinase"/>
    <property type="match status" value="1"/>
</dbReference>
<dbReference type="PIRSF" id="PIRSF000722">
    <property type="entry name" value="Acetate_prop_kin"/>
    <property type="match status" value="1"/>
</dbReference>
<dbReference type="PRINTS" id="PR00471">
    <property type="entry name" value="ACETATEKNASE"/>
</dbReference>
<dbReference type="SUPFAM" id="SSF53067">
    <property type="entry name" value="Actin-like ATPase domain"/>
    <property type="match status" value="2"/>
</dbReference>
<dbReference type="PROSITE" id="PS01075">
    <property type="entry name" value="ACETATE_KINASE_1"/>
    <property type="match status" value="1"/>
</dbReference>
<dbReference type="PROSITE" id="PS01076">
    <property type="entry name" value="ACETATE_KINASE_2"/>
    <property type="match status" value="1"/>
</dbReference>
<keyword id="KW-0067">ATP-binding</keyword>
<keyword id="KW-0963">Cytoplasm</keyword>
<keyword id="KW-0418">Kinase</keyword>
<keyword id="KW-0460">Magnesium</keyword>
<keyword id="KW-0479">Metal-binding</keyword>
<keyword id="KW-0547">Nucleotide-binding</keyword>
<keyword id="KW-1185">Reference proteome</keyword>
<keyword id="KW-0808">Transferase</keyword>
<accession>B1YKC5</accession>
<sequence length="403" mass="44272">MAKIMAVNAGSSSLKFQLLEMPNETMIAVGLVERVGKDDAIFTIKYGEGQKFTDVLPLATHKEAVELSLEKLMEFGIISSYDEIKGVGHRVLHGKEKYADSVIITEDVMQDIESYTELGPLHIPPNLIGIRAFQAILPNVPQVAVFDTAFHQTMPEENFLYSLPYEYYTEYGIRKYGFHGTSHKYVTERASELLGRPLQDLRLISCHLGSGASIAAVAGGESIDTTMGFTPLEGITMGTRSGSLDPALIPFLMEKTGKTAEDVLNVMNKESGIYGLSGLSSDLRDVQTAAKEGNHRSEMALRIFANRIHGYIGQYAAEMNGVDAIIFTAGVGENSDSIRERVLRGLEFMGVYWDPSLNNGARGEELFINYPHSPVKVIIIPTNEELMIARDTVRVGGLVEQNA</sequence>
<evidence type="ECO:0000255" key="1">
    <source>
        <dbReference type="HAMAP-Rule" id="MF_00020"/>
    </source>
</evidence>
<comment type="function">
    <text evidence="1">Catalyzes the formation of acetyl phosphate from acetate and ATP. Can also catalyze the reverse reaction.</text>
</comment>
<comment type="catalytic activity">
    <reaction evidence="1">
        <text>acetate + ATP = acetyl phosphate + ADP</text>
        <dbReference type="Rhea" id="RHEA:11352"/>
        <dbReference type="ChEBI" id="CHEBI:22191"/>
        <dbReference type="ChEBI" id="CHEBI:30089"/>
        <dbReference type="ChEBI" id="CHEBI:30616"/>
        <dbReference type="ChEBI" id="CHEBI:456216"/>
        <dbReference type="EC" id="2.7.2.1"/>
    </reaction>
</comment>
<comment type="cofactor">
    <cofactor evidence="1">
        <name>Mg(2+)</name>
        <dbReference type="ChEBI" id="CHEBI:18420"/>
    </cofactor>
    <cofactor evidence="1">
        <name>Mn(2+)</name>
        <dbReference type="ChEBI" id="CHEBI:29035"/>
    </cofactor>
    <text evidence="1">Mg(2+). Can also accept Mn(2+).</text>
</comment>
<comment type="pathway">
    <text evidence="1">Metabolic intermediate biosynthesis; acetyl-CoA biosynthesis; acetyl-CoA from acetate: step 1/2.</text>
</comment>
<comment type="subunit">
    <text evidence="1">Homodimer.</text>
</comment>
<comment type="subcellular location">
    <subcellularLocation>
        <location evidence="1">Cytoplasm</location>
    </subcellularLocation>
</comment>
<comment type="similarity">
    <text evidence="1">Belongs to the acetokinase family.</text>
</comment>